<organism>
    <name type="scientific">Lytechinus variegatus</name>
    <name type="common">Green sea urchin</name>
    <name type="synonym">Echinus variegatus</name>
    <dbReference type="NCBI Taxonomy" id="7654"/>
    <lineage>
        <taxon>Eukaryota</taxon>
        <taxon>Metazoa</taxon>
        <taxon>Echinodermata</taxon>
        <taxon>Eleutherozoa</taxon>
        <taxon>Echinozoa</taxon>
        <taxon>Echinoidea</taxon>
        <taxon>Euechinoidea</taxon>
        <taxon>Echinacea</taxon>
        <taxon>Temnopleuroida</taxon>
        <taxon>Toxopneustidae</taxon>
        <taxon>Lytechinus</taxon>
    </lineage>
</organism>
<keyword id="KW-0238">DNA-binding</keyword>
<keyword id="KW-0539">Nucleus</keyword>
<keyword id="KW-0804">Transcription</keyword>
<keyword id="KW-0805">Transcription regulation</keyword>
<gene>
    <name type="primary">ETS-2</name>
</gene>
<evidence type="ECO:0000250" key="1"/>
<evidence type="ECO:0000255" key="2">
    <source>
        <dbReference type="PROSITE-ProRule" id="PRU00237"/>
    </source>
</evidence>
<evidence type="ECO:0000305" key="3"/>
<protein>
    <recommendedName>
        <fullName>Protein C-ets-2</fullName>
    </recommendedName>
</protein>
<comment type="function">
    <text evidence="1">Probable transcription factor.</text>
</comment>
<comment type="subcellular location">
    <subcellularLocation>
        <location>Nucleus</location>
    </subcellularLocation>
</comment>
<comment type="similarity">
    <text evidence="3">Belongs to the ETS family.</text>
</comment>
<proteinExistence type="inferred from homology"/>
<sequence length="110" mass="13080">SGPIQLWQFLLELLTDKTCQHIISWTGDGWEFKLSDPDEVARRWGKRKNKPKMNYEKLSRGLRYYYDKNIIHKTAGKRYVYRFVCDLQSLLGYSPEELHEMVGVPPRDDD</sequence>
<feature type="chain" id="PRO_0000204079" description="Protein C-ets-2">
    <location>
        <begin position="1" status="less than"/>
        <end position="110" status="greater than"/>
    </location>
</feature>
<feature type="DNA-binding region" description="ETS" evidence="2">
    <location>
        <begin position="1" status="less than"/>
        <end position="84"/>
    </location>
</feature>
<feature type="non-terminal residue">
    <location>
        <position position="1"/>
    </location>
</feature>
<feature type="non-terminal residue">
    <location>
        <position position="110"/>
    </location>
</feature>
<accession>P29773</accession>
<dbReference type="EMBL" id="M18944">
    <property type="protein sequence ID" value="AAA29999.1"/>
    <property type="molecule type" value="Genomic_DNA"/>
</dbReference>
<dbReference type="PIR" id="A45938">
    <property type="entry name" value="A45938"/>
</dbReference>
<dbReference type="SMR" id="P29773"/>
<dbReference type="OrthoDB" id="10067219at2759"/>
<dbReference type="GO" id="GO:0005634">
    <property type="term" value="C:nucleus"/>
    <property type="evidence" value="ECO:0007669"/>
    <property type="project" value="UniProtKB-SubCell"/>
</dbReference>
<dbReference type="GO" id="GO:0000981">
    <property type="term" value="F:DNA-binding transcription factor activity, RNA polymerase II-specific"/>
    <property type="evidence" value="ECO:0007669"/>
    <property type="project" value="TreeGrafter"/>
</dbReference>
<dbReference type="GO" id="GO:0043565">
    <property type="term" value="F:sequence-specific DNA binding"/>
    <property type="evidence" value="ECO:0007669"/>
    <property type="project" value="InterPro"/>
</dbReference>
<dbReference type="GO" id="GO:0030154">
    <property type="term" value="P:cell differentiation"/>
    <property type="evidence" value="ECO:0007669"/>
    <property type="project" value="TreeGrafter"/>
</dbReference>
<dbReference type="FunFam" id="1.10.10.10:FF:001050">
    <property type="entry name" value="Predicted protein"/>
    <property type="match status" value="1"/>
</dbReference>
<dbReference type="Gene3D" id="1.10.10.10">
    <property type="entry name" value="Winged helix-like DNA-binding domain superfamily/Winged helix DNA-binding domain"/>
    <property type="match status" value="1"/>
</dbReference>
<dbReference type="InterPro" id="IPR000418">
    <property type="entry name" value="Ets_dom"/>
</dbReference>
<dbReference type="InterPro" id="IPR046328">
    <property type="entry name" value="ETS_fam"/>
</dbReference>
<dbReference type="InterPro" id="IPR036388">
    <property type="entry name" value="WH-like_DNA-bd_sf"/>
</dbReference>
<dbReference type="InterPro" id="IPR036390">
    <property type="entry name" value="WH_DNA-bd_sf"/>
</dbReference>
<dbReference type="PANTHER" id="PTHR11849">
    <property type="entry name" value="ETS"/>
    <property type="match status" value="1"/>
</dbReference>
<dbReference type="PANTHER" id="PTHR11849:SF289">
    <property type="entry name" value="ETS-LIKE PROTEIN POINTED"/>
    <property type="match status" value="1"/>
</dbReference>
<dbReference type="Pfam" id="PF00178">
    <property type="entry name" value="Ets"/>
    <property type="match status" value="1"/>
</dbReference>
<dbReference type="PRINTS" id="PR00454">
    <property type="entry name" value="ETSDOMAIN"/>
</dbReference>
<dbReference type="SMART" id="SM00413">
    <property type="entry name" value="ETS"/>
    <property type="match status" value="1"/>
</dbReference>
<dbReference type="SUPFAM" id="SSF46785">
    <property type="entry name" value="Winged helix' DNA-binding domain"/>
    <property type="match status" value="1"/>
</dbReference>
<dbReference type="PROSITE" id="PS00345">
    <property type="entry name" value="ETS_DOMAIN_1"/>
    <property type="match status" value="1"/>
</dbReference>
<dbReference type="PROSITE" id="PS00346">
    <property type="entry name" value="ETS_DOMAIN_2"/>
    <property type="match status" value="1"/>
</dbReference>
<dbReference type="PROSITE" id="PS50061">
    <property type="entry name" value="ETS_DOMAIN_3"/>
    <property type="match status" value="1"/>
</dbReference>
<name>ETS2_LYTVA</name>
<reference key="1">
    <citation type="journal article" date="1988" name="Dev. Biol.">
        <title>Molecular cloning of the ets proto-oncogene of the sea urchin and analysis of its developmental expression.</title>
        <authorList>
            <person name="Chen Z.Q."/>
            <person name="Kan N.C."/>
            <person name="Pribyl L."/>
            <person name="Lautenberger J.A."/>
            <person name="Moudrianakis E."/>
            <person name="Papas T.S."/>
        </authorList>
    </citation>
    <scope>NUCLEOTIDE SEQUENCE [GENOMIC DNA]</scope>
</reference>